<accession>A7N127</accession>
<sequence>MTLQIDRYAVFGNPIGHSKSPFIHTLFARQTNQSLVYTAETAPVDGFVEAAKAFFADDGKGCNVTVPFKEDAYRFANRLTERAELAGAVNTLKKLDDGEIIGDNTDGEGLVQDLLQHQVVLEGARILVIGAGGAARGVIKPLLDQKPSSLTITNRTFSKAQQLADLFVSHGPIVAKEMTTIEEAYDVIINSTSASLNGELPAVSSAIFSTNSTSYDMMYGKGLTSFNQWAKEHGAAHAYDGLGMLVGQAAESFMLWRGLRPGAKQILRELRKNLEGQ</sequence>
<reference key="1">
    <citation type="submission" date="2007-08" db="EMBL/GenBank/DDBJ databases">
        <authorList>
            <consortium name="The Vibrio harveyi Genome Sequencing Project"/>
            <person name="Bassler B."/>
            <person name="Clifton S.W."/>
            <person name="Fulton L."/>
            <person name="Delehaunty K."/>
            <person name="Fronick C."/>
            <person name="Harrison M."/>
            <person name="Markivic C."/>
            <person name="Fulton R."/>
            <person name="Tin-Wollam A.-M."/>
            <person name="Shah N."/>
            <person name="Pepin K."/>
            <person name="Nash W."/>
            <person name="Thiruvilangam P."/>
            <person name="Bhonagiri V."/>
            <person name="Waters C."/>
            <person name="Tu K.C."/>
            <person name="Irgon J."/>
            <person name="Wilson R.K."/>
        </authorList>
    </citation>
    <scope>NUCLEOTIDE SEQUENCE [LARGE SCALE GENOMIC DNA]</scope>
    <source>
        <strain>ATCC BAA-1116 / BB120</strain>
    </source>
</reference>
<evidence type="ECO:0000255" key="1">
    <source>
        <dbReference type="HAMAP-Rule" id="MF_00222"/>
    </source>
</evidence>
<proteinExistence type="inferred from homology"/>
<protein>
    <recommendedName>
        <fullName evidence="1">Shikimate dehydrogenase (NADP(+))</fullName>
        <shortName evidence="1">SDH</shortName>
        <ecNumber evidence="1">1.1.1.25</ecNumber>
    </recommendedName>
</protein>
<feature type="chain" id="PRO_1000021360" description="Shikimate dehydrogenase (NADP(+))">
    <location>
        <begin position="1"/>
        <end position="277"/>
    </location>
</feature>
<feature type="active site" description="Proton acceptor" evidence="1">
    <location>
        <position position="69"/>
    </location>
</feature>
<feature type="binding site" evidence="1">
    <location>
        <begin position="18"/>
        <end position="20"/>
    </location>
    <ligand>
        <name>shikimate</name>
        <dbReference type="ChEBI" id="CHEBI:36208"/>
    </ligand>
</feature>
<feature type="binding site" evidence="1">
    <location>
        <position position="65"/>
    </location>
    <ligand>
        <name>shikimate</name>
        <dbReference type="ChEBI" id="CHEBI:36208"/>
    </ligand>
</feature>
<feature type="binding site" evidence="1">
    <location>
        <position position="81"/>
    </location>
    <ligand>
        <name>NADP(+)</name>
        <dbReference type="ChEBI" id="CHEBI:58349"/>
    </ligand>
</feature>
<feature type="binding site" evidence="1">
    <location>
        <position position="90"/>
    </location>
    <ligand>
        <name>shikimate</name>
        <dbReference type="ChEBI" id="CHEBI:36208"/>
    </ligand>
</feature>
<feature type="binding site" evidence="1">
    <location>
        <position position="106"/>
    </location>
    <ligand>
        <name>shikimate</name>
        <dbReference type="ChEBI" id="CHEBI:36208"/>
    </ligand>
</feature>
<feature type="binding site" evidence="1">
    <location>
        <begin position="130"/>
        <end position="134"/>
    </location>
    <ligand>
        <name>NADP(+)</name>
        <dbReference type="ChEBI" id="CHEBI:58349"/>
    </ligand>
</feature>
<feature type="binding site" evidence="1">
    <location>
        <begin position="154"/>
        <end position="159"/>
    </location>
    <ligand>
        <name>NADP(+)</name>
        <dbReference type="ChEBI" id="CHEBI:58349"/>
    </ligand>
</feature>
<feature type="binding site" evidence="1">
    <location>
        <position position="217"/>
    </location>
    <ligand>
        <name>NADP(+)</name>
        <dbReference type="ChEBI" id="CHEBI:58349"/>
    </ligand>
</feature>
<feature type="binding site" evidence="1">
    <location>
        <position position="219"/>
    </location>
    <ligand>
        <name>shikimate</name>
        <dbReference type="ChEBI" id="CHEBI:36208"/>
    </ligand>
</feature>
<feature type="binding site" evidence="1">
    <location>
        <position position="241"/>
    </location>
    <ligand>
        <name>NADP(+)</name>
        <dbReference type="ChEBI" id="CHEBI:58349"/>
    </ligand>
</feature>
<gene>
    <name evidence="1" type="primary">aroE</name>
    <name type="ordered locus">VIBHAR_00382</name>
</gene>
<comment type="function">
    <text evidence="1">Involved in the biosynthesis of the chorismate, which leads to the biosynthesis of aromatic amino acids. Catalyzes the reversible NADPH linked reduction of 3-dehydroshikimate (DHSA) to yield shikimate (SA).</text>
</comment>
<comment type="catalytic activity">
    <reaction evidence="1">
        <text>shikimate + NADP(+) = 3-dehydroshikimate + NADPH + H(+)</text>
        <dbReference type="Rhea" id="RHEA:17737"/>
        <dbReference type="ChEBI" id="CHEBI:15378"/>
        <dbReference type="ChEBI" id="CHEBI:16630"/>
        <dbReference type="ChEBI" id="CHEBI:36208"/>
        <dbReference type="ChEBI" id="CHEBI:57783"/>
        <dbReference type="ChEBI" id="CHEBI:58349"/>
        <dbReference type="EC" id="1.1.1.25"/>
    </reaction>
</comment>
<comment type="pathway">
    <text evidence="1">Metabolic intermediate biosynthesis; chorismate biosynthesis; chorismate from D-erythrose 4-phosphate and phosphoenolpyruvate: step 4/7.</text>
</comment>
<comment type="subunit">
    <text evidence="1">Homodimer.</text>
</comment>
<comment type="similarity">
    <text evidence="1">Belongs to the shikimate dehydrogenase family.</text>
</comment>
<keyword id="KW-0028">Amino-acid biosynthesis</keyword>
<keyword id="KW-0057">Aromatic amino acid biosynthesis</keyword>
<keyword id="KW-0521">NADP</keyword>
<keyword id="KW-0560">Oxidoreductase</keyword>
<name>AROE_VIBC1</name>
<dbReference type="EC" id="1.1.1.25" evidence="1"/>
<dbReference type="EMBL" id="CP000789">
    <property type="protein sequence ID" value="ABU69397.1"/>
    <property type="molecule type" value="Genomic_DNA"/>
</dbReference>
<dbReference type="RefSeq" id="WP_012126630.1">
    <property type="nucleotide sequence ID" value="NC_009783.1"/>
</dbReference>
<dbReference type="SMR" id="A7N127"/>
<dbReference type="KEGG" id="vha:VIBHAR_00382"/>
<dbReference type="PATRIC" id="fig|338187.25.peg.2209"/>
<dbReference type="UniPathway" id="UPA00053">
    <property type="reaction ID" value="UER00087"/>
</dbReference>
<dbReference type="Proteomes" id="UP000008152">
    <property type="component" value="Chromosome I"/>
</dbReference>
<dbReference type="GO" id="GO:0005829">
    <property type="term" value="C:cytosol"/>
    <property type="evidence" value="ECO:0007669"/>
    <property type="project" value="TreeGrafter"/>
</dbReference>
<dbReference type="GO" id="GO:0050661">
    <property type="term" value="F:NADP binding"/>
    <property type="evidence" value="ECO:0007669"/>
    <property type="project" value="InterPro"/>
</dbReference>
<dbReference type="GO" id="GO:0004764">
    <property type="term" value="F:shikimate 3-dehydrogenase (NADP+) activity"/>
    <property type="evidence" value="ECO:0007669"/>
    <property type="project" value="UniProtKB-UniRule"/>
</dbReference>
<dbReference type="GO" id="GO:0008652">
    <property type="term" value="P:amino acid biosynthetic process"/>
    <property type="evidence" value="ECO:0007669"/>
    <property type="project" value="UniProtKB-KW"/>
</dbReference>
<dbReference type="GO" id="GO:0009073">
    <property type="term" value="P:aromatic amino acid family biosynthetic process"/>
    <property type="evidence" value="ECO:0007669"/>
    <property type="project" value="UniProtKB-KW"/>
</dbReference>
<dbReference type="GO" id="GO:0009423">
    <property type="term" value="P:chorismate biosynthetic process"/>
    <property type="evidence" value="ECO:0007669"/>
    <property type="project" value="UniProtKB-UniRule"/>
</dbReference>
<dbReference type="GO" id="GO:0019632">
    <property type="term" value="P:shikimate metabolic process"/>
    <property type="evidence" value="ECO:0007669"/>
    <property type="project" value="InterPro"/>
</dbReference>
<dbReference type="CDD" id="cd01065">
    <property type="entry name" value="NAD_bind_Shikimate_DH"/>
    <property type="match status" value="1"/>
</dbReference>
<dbReference type="FunFam" id="3.40.50.10860:FF:000006">
    <property type="entry name" value="Shikimate dehydrogenase (NADP(+))"/>
    <property type="match status" value="1"/>
</dbReference>
<dbReference type="FunFam" id="3.40.50.720:FF:000104">
    <property type="entry name" value="Shikimate dehydrogenase (NADP(+))"/>
    <property type="match status" value="1"/>
</dbReference>
<dbReference type="Gene3D" id="3.40.50.10860">
    <property type="entry name" value="Leucine Dehydrogenase, chain A, domain 1"/>
    <property type="match status" value="1"/>
</dbReference>
<dbReference type="Gene3D" id="3.40.50.720">
    <property type="entry name" value="NAD(P)-binding Rossmann-like Domain"/>
    <property type="match status" value="1"/>
</dbReference>
<dbReference type="HAMAP" id="MF_00222">
    <property type="entry name" value="Shikimate_DH_AroE"/>
    <property type="match status" value="1"/>
</dbReference>
<dbReference type="InterPro" id="IPR046346">
    <property type="entry name" value="Aminoacid_DH-like_N_sf"/>
</dbReference>
<dbReference type="InterPro" id="IPR036291">
    <property type="entry name" value="NAD(P)-bd_dom_sf"/>
</dbReference>
<dbReference type="InterPro" id="IPR041121">
    <property type="entry name" value="SDH_C"/>
</dbReference>
<dbReference type="InterPro" id="IPR011342">
    <property type="entry name" value="Shikimate_DH"/>
</dbReference>
<dbReference type="InterPro" id="IPR013708">
    <property type="entry name" value="Shikimate_DH-bd_N"/>
</dbReference>
<dbReference type="InterPro" id="IPR022893">
    <property type="entry name" value="Shikimate_DH_fam"/>
</dbReference>
<dbReference type="InterPro" id="IPR006151">
    <property type="entry name" value="Shikm_DH/Glu-tRNA_Rdtase"/>
</dbReference>
<dbReference type="NCBIfam" id="TIGR00507">
    <property type="entry name" value="aroE"/>
    <property type="match status" value="1"/>
</dbReference>
<dbReference type="NCBIfam" id="NF001310">
    <property type="entry name" value="PRK00258.1-2"/>
    <property type="match status" value="1"/>
</dbReference>
<dbReference type="PANTHER" id="PTHR21089:SF1">
    <property type="entry name" value="BIFUNCTIONAL 3-DEHYDROQUINATE DEHYDRATASE_SHIKIMATE DEHYDROGENASE, CHLOROPLASTIC"/>
    <property type="match status" value="1"/>
</dbReference>
<dbReference type="PANTHER" id="PTHR21089">
    <property type="entry name" value="SHIKIMATE DEHYDROGENASE"/>
    <property type="match status" value="1"/>
</dbReference>
<dbReference type="Pfam" id="PF18317">
    <property type="entry name" value="SDH_C"/>
    <property type="match status" value="1"/>
</dbReference>
<dbReference type="Pfam" id="PF01488">
    <property type="entry name" value="Shikimate_DH"/>
    <property type="match status" value="1"/>
</dbReference>
<dbReference type="Pfam" id="PF08501">
    <property type="entry name" value="Shikimate_dh_N"/>
    <property type="match status" value="1"/>
</dbReference>
<dbReference type="SUPFAM" id="SSF53223">
    <property type="entry name" value="Aminoacid dehydrogenase-like, N-terminal domain"/>
    <property type="match status" value="1"/>
</dbReference>
<dbReference type="SUPFAM" id="SSF51735">
    <property type="entry name" value="NAD(P)-binding Rossmann-fold domains"/>
    <property type="match status" value="1"/>
</dbReference>
<organism>
    <name type="scientific">Vibrio campbellii (strain ATCC BAA-1116)</name>
    <dbReference type="NCBI Taxonomy" id="2902295"/>
    <lineage>
        <taxon>Bacteria</taxon>
        <taxon>Pseudomonadati</taxon>
        <taxon>Pseudomonadota</taxon>
        <taxon>Gammaproteobacteria</taxon>
        <taxon>Vibrionales</taxon>
        <taxon>Vibrionaceae</taxon>
        <taxon>Vibrio</taxon>
    </lineage>
</organism>